<accession>Q034Y7</accession>
<evidence type="ECO:0000255" key="1">
    <source>
        <dbReference type="HAMAP-Rule" id="MF_00531"/>
    </source>
</evidence>
<evidence type="ECO:0000305" key="2"/>
<keyword id="KW-1185">Reference proteome</keyword>
<keyword id="KW-0687">Ribonucleoprotein</keyword>
<keyword id="KW-0689">Ribosomal protein</keyword>
<keyword id="KW-0694">RNA-binding</keyword>
<keyword id="KW-0699">rRNA-binding</keyword>
<name>RS19_LACP3</name>
<gene>
    <name evidence="1" type="primary">rpsS</name>
    <name type="ordered locus">LSEI_2499</name>
</gene>
<feature type="chain" id="PRO_1000051063" description="Small ribosomal subunit protein uS19">
    <location>
        <begin position="1"/>
        <end position="93"/>
    </location>
</feature>
<sequence>MGRSLKKGPFADAHLLKKIEAQADNDKKTVIRTWSRRSTIFPSFIGYTIAVYDGRKHVPVFVSEDMVGHKLGEFVPTRTFRGHNTDDKKTTAR</sequence>
<proteinExistence type="inferred from homology"/>
<organism>
    <name type="scientific">Lacticaseibacillus paracasei (strain ATCC 334 / BCRC 17002 / CCUG 31169 / CIP 107868 / KCTC 3260 / NRRL B-441)</name>
    <name type="common">Lactobacillus paracasei</name>
    <dbReference type="NCBI Taxonomy" id="321967"/>
    <lineage>
        <taxon>Bacteria</taxon>
        <taxon>Bacillati</taxon>
        <taxon>Bacillota</taxon>
        <taxon>Bacilli</taxon>
        <taxon>Lactobacillales</taxon>
        <taxon>Lactobacillaceae</taxon>
        <taxon>Lacticaseibacillus</taxon>
    </lineage>
</organism>
<reference key="1">
    <citation type="journal article" date="2006" name="Proc. Natl. Acad. Sci. U.S.A.">
        <title>Comparative genomics of the lactic acid bacteria.</title>
        <authorList>
            <person name="Makarova K.S."/>
            <person name="Slesarev A."/>
            <person name="Wolf Y.I."/>
            <person name="Sorokin A."/>
            <person name="Mirkin B."/>
            <person name="Koonin E.V."/>
            <person name="Pavlov A."/>
            <person name="Pavlova N."/>
            <person name="Karamychev V."/>
            <person name="Polouchine N."/>
            <person name="Shakhova V."/>
            <person name="Grigoriev I."/>
            <person name="Lou Y."/>
            <person name="Rohksar D."/>
            <person name="Lucas S."/>
            <person name="Huang K."/>
            <person name="Goodstein D.M."/>
            <person name="Hawkins T."/>
            <person name="Plengvidhya V."/>
            <person name="Welker D."/>
            <person name="Hughes J."/>
            <person name="Goh Y."/>
            <person name="Benson A."/>
            <person name="Baldwin K."/>
            <person name="Lee J.-H."/>
            <person name="Diaz-Muniz I."/>
            <person name="Dosti B."/>
            <person name="Smeianov V."/>
            <person name="Wechter W."/>
            <person name="Barabote R."/>
            <person name="Lorca G."/>
            <person name="Altermann E."/>
            <person name="Barrangou R."/>
            <person name="Ganesan B."/>
            <person name="Xie Y."/>
            <person name="Rawsthorne H."/>
            <person name="Tamir D."/>
            <person name="Parker C."/>
            <person name="Breidt F."/>
            <person name="Broadbent J.R."/>
            <person name="Hutkins R."/>
            <person name="O'Sullivan D."/>
            <person name="Steele J."/>
            <person name="Unlu G."/>
            <person name="Saier M.H. Jr."/>
            <person name="Klaenhammer T."/>
            <person name="Richardson P."/>
            <person name="Kozyavkin S."/>
            <person name="Weimer B.C."/>
            <person name="Mills D.A."/>
        </authorList>
    </citation>
    <scope>NUCLEOTIDE SEQUENCE [LARGE SCALE GENOMIC DNA]</scope>
    <source>
        <strain>ATCC 334 / BCRC 17002 / CCUG 31169 / CIP 107868 / KCTC 3260 / NRRL B-441</strain>
    </source>
</reference>
<comment type="function">
    <text evidence="1">Protein S19 forms a complex with S13 that binds strongly to the 16S ribosomal RNA.</text>
</comment>
<comment type="similarity">
    <text evidence="1">Belongs to the universal ribosomal protein uS19 family.</text>
</comment>
<protein>
    <recommendedName>
        <fullName evidence="1">Small ribosomal subunit protein uS19</fullName>
    </recommendedName>
    <alternativeName>
        <fullName evidence="2">30S ribosomal protein S19</fullName>
    </alternativeName>
</protein>
<dbReference type="EMBL" id="CP000423">
    <property type="protein sequence ID" value="ABJ71235.1"/>
    <property type="molecule type" value="Genomic_DNA"/>
</dbReference>
<dbReference type="RefSeq" id="WP_003567557.1">
    <property type="nucleotide sequence ID" value="NC_008526.1"/>
</dbReference>
<dbReference type="RefSeq" id="YP_807677.1">
    <property type="nucleotide sequence ID" value="NC_008526.1"/>
</dbReference>
<dbReference type="SMR" id="Q034Y7"/>
<dbReference type="STRING" id="321967.LSEI_2499"/>
<dbReference type="PaxDb" id="321967-LSEI_2499"/>
<dbReference type="GeneID" id="93270085"/>
<dbReference type="KEGG" id="lca:LSEI_2499"/>
<dbReference type="PATRIC" id="fig|321967.11.peg.2453"/>
<dbReference type="HOGENOM" id="CLU_144911_0_1_9"/>
<dbReference type="PRO" id="PR:Q034Y7"/>
<dbReference type="Proteomes" id="UP000001651">
    <property type="component" value="Chromosome"/>
</dbReference>
<dbReference type="GO" id="GO:0005737">
    <property type="term" value="C:cytoplasm"/>
    <property type="evidence" value="ECO:0007669"/>
    <property type="project" value="UniProtKB-ARBA"/>
</dbReference>
<dbReference type="GO" id="GO:0015935">
    <property type="term" value="C:small ribosomal subunit"/>
    <property type="evidence" value="ECO:0007669"/>
    <property type="project" value="InterPro"/>
</dbReference>
<dbReference type="GO" id="GO:0019843">
    <property type="term" value="F:rRNA binding"/>
    <property type="evidence" value="ECO:0007669"/>
    <property type="project" value="UniProtKB-UniRule"/>
</dbReference>
<dbReference type="GO" id="GO:0003735">
    <property type="term" value="F:structural constituent of ribosome"/>
    <property type="evidence" value="ECO:0007669"/>
    <property type="project" value="InterPro"/>
</dbReference>
<dbReference type="GO" id="GO:0000028">
    <property type="term" value="P:ribosomal small subunit assembly"/>
    <property type="evidence" value="ECO:0007669"/>
    <property type="project" value="TreeGrafter"/>
</dbReference>
<dbReference type="GO" id="GO:0006412">
    <property type="term" value="P:translation"/>
    <property type="evidence" value="ECO:0007669"/>
    <property type="project" value="UniProtKB-UniRule"/>
</dbReference>
<dbReference type="FunFam" id="3.30.860.10:FF:000001">
    <property type="entry name" value="30S ribosomal protein S19"/>
    <property type="match status" value="1"/>
</dbReference>
<dbReference type="Gene3D" id="3.30.860.10">
    <property type="entry name" value="30s Ribosomal Protein S19, Chain A"/>
    <property type="match status" value="1"/>
</dbReference>
<dbReference type="HAMAP" id="MF_00531">
    <property type="entry name" value="Ribosomal_uS19"/>
    <property type="match status" value="1"/>
</dbReference>
<dbReference type="InterPro" id="IPR002222">
    <property type="entry name" value="Ribosomal_uS19"/>
</dbReference>
<dbReference type="InterPro" id="IPR005732">
    <property type="entry name" value="Ribosomal_uS19_bac-type"/>
</dbReference>
<dbReference type="InterPro" id="IPR020934">
    <property type="entry name" value="Ribosomal_uS19_CS"/>
</dbReference>
<dbReference type="InterPro" id="IPR023575">
    <property type="entry name" value="Ribosomal_uS19_SF"/>
</dbReference>
<dbReference type="NCBIfam" id="TIGR01050">
    <property type="entry name" value="rpsS_bact"/>
    <property type="match status" value="1"/>
</dbReference>
<dbReference type="PANTHER" id="PTHR11880">
    <property type="entry name" value="RIBOSOMAL PROTEIN S19P FAMILY MEMBER"/>
    <property type="match status" value="1"/>
</dbReference>
<dbReference type="PANTHER" id="PTHR11880:SF8">
    <property type="entry name" value="SMALL RIBOSOMAL SUBUNIT PROTEIN US19M"/>
    <property type="match status" value="1"/>
</dbReference>
<dbReference type="Pfam" id="PF00203">
    <property type="entry name" value="Ribosomal_S19"/>
    <property type="match status" value="1"/>
</dbReference>
<dbReference type="PIRSF" id="PIRSF002144">
    <property type="entry name" value="Ribosomal_S19"/>
    <property type="match status" value="1"/>
</dbReference>
<dbReference type="PRINTS" id="PR00975">
    <property type="entry name" value="RIBOSOMALS19"/>
</dbReference>
<dbReference type="SUPFAM" id="SSF54570">
    <property type="entry name" value="Ribosomal protein S19"/>
    <property type="match status" value="1"/>
</dbReference>
<dbReference type="PROSITE" id="PS00323">
    <property type="entry name" value="RIBOSOMAL_S19"/>
    <property type="match status" value="1"/>
</dbReference>